<comment type="subcellular location">
    <subcellularLocation>
        <location evidence="2">Host membrane</location>
        <topology evidence="2">Multi-pass membrane protein</topology>
    </subcellularLocation>
</comment>
<comment type="similarity">
    <text evidence="2">Belongs to the alphaherpesvirinae HHV-1 UL43 family.</text>
</comment>
<name>MB43_GAHVM</name>
<accession>Q9E6M9</accession>
<sequence>MDSVNNSSLPPSYTTTGRTYGHCLQMLTCLEPPCTATNGNGISNNRCLKCIVVTMCSIFSIAAHLAITLSCITLIQFIDQKIIYINCTIYAITGFLIAFIVRLTIKSSEVLTSIGKPAQFIFALISSIADTLITRNMLIDSNPSYVKILRAIEMTSLMCFVMLGAFIASYHYVCLATSGDLTWKAGFLILTAGTIIGISAPYGNISSLFGFLFLYTILAINVVRDASKALMNTCYYRICRATTLRHPSRLGCGRMSSTQDVNATHEEAISSADTIDGQIPMVVMSHATGVLIPVVIALQRYMTKKTVSLTSTDMLQGVCGVLVGASVSIFIPSRRDESLSRPIIILLSIIGAMAITLAGFGLVLGPTLFSACAAALSCYTCINIRNANKGIKQLAAAYVVKSILGFIITSLLVCILVALS</sequence>
<proteinExistence type="inferred from homology"/>
<organismHost>
    <name type="scientific">Gallus gallus</name>
    <name type="common">Chicken</name>
    <dbReference type="NCBI Taxonomy" id="9031"/>
</organismHost>
<keyword id="KW-1043">Host membrane</keyword>
<keyword id="KW-0472">Membrane</keyword>
<keyword id="KW-1185">Reference proteome</keyword>
<keyword id="KW-0812">Transmembrane</keyword>
<keyword id="KW-1133">Transmembrane helix</keyword>
<protein>
    <recommendedName>
        <fullName>Membrane protein UL43 homolog</fullName>
    </recommendedName>
</protein>
<evidence type="ECO:0000255" key="1"/>
<evidence type="ECO:0000305" key="2"/>
<feature type="chain" id="PRO_0000406548" description="Membrane protein UL43 homolog">
    <location>
        <begin position="1"/>
        <end position="420"/>
    </location>
</feature>
<feature type="transmembrane region" description="Helical" evidence="1">
    <location>
        <begin position="58"/>
        <end position="78"/>
    </location>
</feature>
<feature type="transmembrane region" description="Helical" evidence="1">
    <location>
        <begin position="81"/>
        <end position="101"/>
    </location>
</feature>
<feature type="transmembrane region" description="Helical" evidence="1">
    <location>
        <begin position="114"/>
        <end position="134"/>
    </location>
</feature>
<feature type="transmembrane region" description="Helical" evidence="1">
    <location>
        <begin position="157"/>
        <end position="177"/>
    </location>
</feature>
<feature type="transmembrane region" description="Helical" evidence="1">
    <location>
        <begin position="181"/>
        <end position="201"/>
    </location>
</feature>
<feature type="transmembrane region" description="Helical" evidence="1">
    <location>
        <begin position="203"/>
        <end position="223"/>
    </location>
</feature>
<feature type="transmembrane region" description="Helical" evidence="1">
    <location>
        <begin position="278"/>
        <end position="298"/>
    </location>
</feature>
<feature type="transmembrane region" description="Helical" evidence="1">
    <location>
        <begin position="312"/>
        <end position="332"/>
    </location>
</feature>
<feature type="transmembrane region" description="Helical" evidence="1">
    <location>
        <begin position="343"/>
        <end position="363"/>
    </location>
</feature>
<feature type="transmembrane region" description="Helical" evidence="1">
    <location>
        <begin position="364"/>
        <end position="384"/>
    </location>
</feature>
<feature type="transmembrane region" description="Helical" evidence="1">
    <location>
        <begin position="399"/>
        <end position="419"/>
    </location>
</feature>
<reference key="1">
    <citation type="journal article" date="2000" name="J. Virol.">
        <title>The genome of a very virulent Marek's disease virus.</title>
        <authorList>
            <person name="Tulman E.R."/>
            <person name="Afonso C.L."/>
            <person name="Lu Z."/>
            <person name="Zsak L."/>
            <person name="Rock D.L."/>
            <person name="Kutish G.F."/>
        </authorList>
    </citation>
    <scope>NUCLEOTIDE SEQUENCE [LARGE SCALE GENOMIC DNA]</scope>
</reference>
<organism>
    <name type="scientific">Gallid herpesvirus 2 (strain Chicken/Md5/ATCC VR-987)</name>
    <name type="common">GaHV-2</name>
    <name type="synonym">Marek's disease herpesvirus type 1</name>
    <dbReference type="NCBI Taxonomy" id="10389"/>
    <lineage>
        <taxon>Viruses</taxon>
        <taxon>Duplodnaviria</taxon>
        <taxon>Heunggongvirae</taxon>
        <taxon>Peploviricota</taxon>
        <taxon>Herviviricetes</taxon>
        <taxon>Herpesvirales</taxon>
        <taxon>Orthoherpesviridae</taxon>
        <taxon>Alphaherpesvirinae</taxon>
        <taxon>Mardivirus</taxon>
        <taxon>Mardivirus gallidalpha2</taxon>
        <taxon>Gallid alphaherpesvirus 2</taxon>
    </lineage>
</organism>
<gene>
    <name type="primary">MDV056</name>
</gene>
<dbReference type="EMBL" id="AF243438">
    <property type="protein sequence ID" value="AAG14236.1"/>
    <property type="molecule type" value="Genomic_DNA"/>
</dbReference>
<dbReference type="RefSeq" id="YP_001033972.1">
    <property type="nucleotide sequence ID" value="NC_002229.3"/>
</dbReference>
<dbReference type="GeneID" id="4811517"/>
<dbReference type="KEGG" id="vg:4811517"/>
<dbReference type="Proteomes" id="UP000008072">
    <property type="component" value="Segment"/>
</dbReference>
<dbReference type="GO" id="GO:0033644">
    <property type="term" value="C:host cell membrane"/>
    <property type="evidence" value="ECO:0007669"/>
    <property type="project" value="UniProtKB-SubCell"/>
</dbReference>
<dbReference type="GO" id="GO:0016020">
    <property type="term" value="C:membrane"/>
    <property type="evidence" value="ECO:0007669"/>
    <property type="project" value="UniProtKB-KW"/>
</dbReference>
<dbReference type="GO" id="GO:0019033">
    <property type="term" value="C:viral tegument"/>
    <property type="evidence" value="ECO:0007669"/>
    <property type="project" value="InterPro"/>
</dbReference>
<dbReference type="InterPro" id="IPR007764">
    <property type="entry name" value="Herpes_UL43"/>
</dbReference>
<dbReference type="Pfam" id="PF05072">
    <property type="entry name" value="Herpes_UL43"/>
    <property type="match status" value="1"/>
</dbReference>